<proteinExistence type="inferred from homology"/>
<evidence type="ECO:0000255" key="1">
    <source>
        <dbReference type="HAMAP-Rule" id="MF_00365"/>
    </source>
</evidence>
<dbReference type="EMBL" id="CP001364">
    <property type="protein sequence ID" value="ACM55541.1"/>
    <property type="molecule type" value="Genomic_DNA"/>
</dbReference>
<dbReference type="SMR" id="B9LH68"/>
<dbReference type="KEGG" id="chl:Chy400_4187"/>
<dbReference type="HOGENOM" id="CLU_040267_0_1_0"/>
<dbReference type="OrthoDB" id="9803889at2"/>
<dbReference type="GO" id="GO:0005737">
    <property type="term" value="C:cytoplasm"/>
    <property type="evidence" value="ECO:0007669"/>
    <property type="project" value="UniProtKB-SubCell"/>
</dbReference>
<dbReference type="GO" id="GO:0005524">
    <property type="term" value="F:ATP binding"/>
    <property type="evidence" value="ECO:0007669"/>
    <property type="project" value="UniProtKB-UniRule"/>
</dbReference>
<dbReference type="GO" id="GO:0016887">
    <property type="term" value="F:ATP hydrolysis activity"/>
    <property type="evidence" value="ECO:0007669"/>
    <property type="project" value="InterPro"/>
</dbReference>
<dbReference type="GO" id="GO:0003697">
    <property type="term" value="F:single-stranded DNA binding"/>
    <property type="evidence" value="ECO:0007669"/>
    <property type="project" value="UniProtKB-UniRule"/>
</dbReference>
<dbReference type="GO" id="GO:0006260">
    <property type="term" value="P:DNA replication"/>
    <property type="evidence" value="ECO:0007669"/>
    <property type="project" value="UniProtKB-UniRule"/>
</dbReference>
<dbReference type="GO" id="GO:0000731">
    <property type="term" value="P:DNA synthesis involved in DNA repair"/>
    <property type="evidence" value="ECO:0007669"/>
    <property type="project" value="TreeGrafter"/>
</dbReference>
<dbReference type="GO" id="GO:0006302">
    <property type="term" value="P:double-strand break repair"/>
    <property type="evidence" value="ECO:0007669"/>
    <property type="project" value="TreeGrafter"/>
</dbReference>
<dbReference type="GO" id="GO:0009432">
    <property type="term" value="P:SOS response"/>
    <property type="evidence" value="ECO:0007669"/>
    <property type="project" value="UniProtKB-UniRule"/>
</dbReference>
<dbReference type="Gene3D" id="3.40.50.300">
    <property type="entry name" value="P-loop containing nucleotide triphosphate hydrolases"/>
    <property type="match status" value="1"/>
</dbReference>
<dbReference type="Gene3D" id="1.20.1050.90">
    <property type="entry name" value="RecF/RecN/SMC, N-terminal domain"/>
    <property type="match status" value="1"/>
</dbReference>
<dbReference type="HAMAP" id="MF_00365">
    <property type="entry name" value="RecF"/>
    <property type="match status" value="1"/>
</dbReference>
<dbReference type="InterPro" id="IPR003593">
    <property type="entry name" value="AAA+_ATPase"/>
</dbReference>
<dbReference type="InterPro" id="IPR001238">
    <property type="entry name" value="DNA-binding_RecF"/>
</dbReference>
<dbReference type="InterPro" id="IPR018078">
    <property type="entry name" value="DNA-binding_RecF_CS"/>
</dbReference>
<dbReference type="InterPro" id="IPR027417">
    <property type="entry name" value="P-loop_NTPase"/>
</dbReference>
<dbReference type="InterPro" id="IPR003395">
    <property type="entry name" value="RecF/RecN/SMC_N"/>
</dbReference>
<dbReference type="InterPro" id="IPR042174">
    <property type="entry name" value="RecF_2"/>
</dbReference>
<dbReference type="NCBIfam" id="TIGR00611">
    <property type="entry name" value="recf"/>
    <property type="match status" value="1"/>
</dbReference>
<dbReference type="PANTHER" id="PTHR32182">
    <property type="entry name" value="DNA REPLICATION AND REPAIR PROTEIN RECF"/>
    <property type="match status" value="1"/>
</dbReference>
<dbReference type="PANTHER" id="PTHR32182:SF0">
    <property type="entry name" value="DNA REPLICATION AND REPAIR PROTEIN RECF"/>
    <property type="match status" value="1"/>
</dbReference>
<dbReference type="Pfam" id="PF02463">
    <property type="entry name" value="SMC_N"/>
    <property type="match status" value="1"/>
</dbReference>
<dbReference type="SMART" id="SM00382">
    <property type="entry name" value="AAA"/>
    <property type="match status" value="1"/>
</dbReference>
<dbReference type="SUPFAM" id="SSF52540">
    <property type="entry name" value="P-loop containing nucleoside triphosphate hydrolases"/>
    <property type="match status" value="1"/>
</dbReference>
<dbReference type="PROSITE" id="PS00617">
    <property type="entry name" value="RECF_1"/>
    <property type="match status" value="1"/>
</dbReference>
<dbReference type="PROSITE" id="PS00618">
    <property type="entry name" value="RECF_2"/>
    <property type="match status" value="1"/>
</dbReference>
<name>RECF_CHLSY</name>
<feature type="chain" id="PRO_1000133679" description="DNA replication and repair protein RecF">
    <location>
        <begin position="1"/>
        <end position="392"/>
    </location>
</feature>
<feature type="binding site" evidence="1">
    <location>
        <begin position="30"/>
        <end position="37"/>
    </location>
    <ligand>
        <name>ATP</name>
        <dbReference type="ChEBI" id="CHEBI:30616"/>
    </ligand>
</feature>
<protein>
    <recommendedName>
        <fullName evidence="1">DNA replication and repair protein RecF</fullName>
    </recommendedName>
</protein>
<comment type="function">
    <text evidence="1">The RecF protein is involved in DNA metabolism; it is required for DNA replication and normal SOS inducibility. RecF binds preferentially to single-stranded, linear DNA. It also seems to bind ATP.</text>
</comment>
<comment type="subcellular location">
    <subcellularLocation>
        <location evidence="1">Cytoplasm</location>
    </subcellularLocation>
</comment>
<comment type="similarity">
    <text evidence="1">Belongs to the RecF family.</text>
</comment>
<reference key="1">
    <citation type="submission" date="2009-01" db="EMBL/GenBank/DDBJ databases">
        <title>Complete sequence of Chloroflexus sp. Y-400-fl.</title>
        <authorList>
            <consortium name="US DOE Joint Genome Institute"/>
            <person name="Lucas S."/>
            <person name="Copeland A."/>
            <person name="Lapidus A."/>
            <person name="Glavina del Rio T."/>
            <person name="Dalin E."/>
            <person name="Tice H."/>
            <person name="Bruce D."/>
            <person name="Goodwin L."/>
            <person name="Pitluck S."/>
            <person name="Sims D."/>
            <person name="Kiss H."/>
            <person name="Brettin T."/>
            <person name="Detter J.C."/>
            <person name="Han C."/>
            <person name="Larimer F."/>
            <person name="Land M."/>
            <person name="Hauser L."/>
            <person name="Kyrpides N."/>
            <person name="Ovchinnikova G."/>
            <person name="Bryant D.A."/>
            <person name="Richardson P."/>
        </authorList>
    </citation>
    <scope>NUCLEOTIDE SEQUENCE [LARGE SCALE GENOMIC DNA]</scope>
    <source>
        <strain>ATCC 29364 / DSM 637 / Y-400-fl</strain>
    </source>
</reference>
<organism>
    <name type="scientific">Chloroflexus aurantiacus (strain ATCC 29364 / DSM 637 / Y-400-fl)</name>
    <dbReference type="NCBI Taxonomy" id="480224"/>
    <lineage>
        <taxon>Bacteria</taxon>
        <taxon>Bacillati</taxon>
        <taxon>Chloroflexota</taxon>
        <taxon>Chloroflexia</taxon>
        <taxon>Chloroflexales</taxon>
        <taxon>Chloroflexineae</taxon>
        <taxon>Chloroflexaceae</taxon>
        <taxon>Chloroflexus</taxon>
    </lineage>
</organism>
<accession>B9LH68</accession>
<keyword id="KW-0067">ATP-binding</keyword>
<keyword id="KW-0963">Cytoplasm</keyword>
<keyword id="KW-0227">DNA damage</keyword>
<keyword id="KW-0234">DNA repair</keyword>
<keyword id="KW-0235">DNA replication</keyword>
<keyword id="KW-0238">DNA-binding</keyword>
<keyword id="KW-0547">Nucleotide-binding</keyword>
<keyword id="KW-0742">SOS response</keyword>
<sequence>MYVHHLFLRDFRNYRRLDLALAPATTLFYGPNAAGKTSLLEAIFYLATTRSPRLSSDRELVRWDAVGEAGTPPFARIAADVERRIGPVRLEVLVQRRADDDGQPLNGAQKLVRIDKRPARAIDLIGQLRVVLFTPTDLTLVDGPPAERRRYLDITLSQLDPHYVRTLAHYQKILLQRNSLLRAWREQRRVPRHVDAELAYWDQELAAAGGYLLAERLRAIVELNDLAGPLYQEMSGGEDRLQIEYAASCDLGTARDAGGLAERLLLAFAAQRSDELARGQTLCGPHRDDLIFTVAGINLGRYGSRGQQRSIALALKIGEAGLMRRRSGEAPVLLLDDVLSELDAQRRAHLLALIHHPDQQTLLTATDLSDFSADFLAAVRRYRVEDGQVFAG</sequence>
<gene>
    <name evidence="1" type="primary">recF</name>
    <name type="ordered locus">Chy400_4187</name>
</gene>